<comment type="function">
    <text evidence="1">Regulates the transcription of the pyrimidine nucleotide (pyr) operon in response to exogenous pyrimidines.</text>
</comment>
<comment type="function">
    <text evidence="1">Also displays a weak uracil phosphoribosyltransferase activity which is not physiologically significant.</text>
</comment>
<comment type="catalytic activity">
    <reaction evidence="1">
        <text>UMP + diphosphate = 5-phospho-alpha-D-ribose 1-diphosphate + uracil</text>
        <dbReference type="Rhea" id="RHEA:13017"/>
        <dbReference type="ChEBI" id="CHEBI:17568"/>
        <dbReference type="ChEBI" id="CHEBI:33019"/>
        <dbReference type="ChEBI" id="CHEBI:57865"/>
        <dbReference type="ChEBI" id="CHEBI:58017"/>
        <dbReference type="EC" id="2.4.2.9"/>
    </reaction>
</comment>
<comment type="similarity">
    <text evidence="1">Belongs to the purine/pyrimidine phosphoribosyltransferase family. PyrR subfamily.</text>
</comment>
<dbReference type="EC" id="2.4.2.9" evidence="1"/>
<dbReference type="EMBL" id="CP000744">
    <property type="protein sequence ID" value="ABR85272.1"/>
    <property type="molecule type" value="Genomic_DNA"/>
</dbReference>
<dbReference type="RefSeq" id="WP_003157749.1">
    <property type="nucleotide sequence ID" value="NC_009656.1"/>
</dbReference>
<dbReference type="SMR" id="A6UYL3"/>
<dbReference type="GeneID" id="77218930"/>
<dbReference type="KEGG" id="pap:PSPA7_0503"/>
<dbReference type="HOGENOM" id="CLU_094234_1_1_6"/>
<dbReference type="Proteomes" id="UP000001582">
    <property type="component" value="Chromosome"/>
</dbReference>
<dbReference type="GO" id="GO:0004845">
    <property type="term" value="F:uracil phosphoribosyltransferase activity"/>
    <property type="evidence" value="ECO:0007669"/>
    <property type="project" value="UniProtKB-UniRule"/>
</dbReference>
<dbReference type="GO" id="GO:0006355">
    <property type="term" value="P:regulation of DNA-templated transcription"/>
    <property type="evidence" value="ECO:0007669"/>
    <property type="project" value="UniProtKB-UniRule"/>
</dbReference>
<dbReference type="CDD" id="cd06223">
    <property type="entry name" value="PRTases_typeI"/>
    <property type="match status" value="1"/>
</dbReference>
<dbReference type="Gene3D" id="3.40.50.2020">
    <property type="match status" value="1"/>
</dbReference>
<dbReference type="HAMAP" id="MF_01219">
    <property type="entry name" value="PyrR"/>
    <property type="match status" value="1"/>
</dbReference>
<dbReference type="InterPro" id="IPR000836">
    <property type="entry name" value="PRibTrfase_dom"/>
</dbReference>
<dbReference type="InterPro" id="IPR029057">
    <property type="entry name" value="PRTase-like"/>
</dbReference>
<dbReference type="InterPro" id="IPR023050">
    <property type="entry name" value="PyrR"/>
</dbReference>
<dbReference type="InterPro" id="IPR050137">
    <property type="entry name" value="PyrR_bifunctional"/>
</dbReference>
<dbReference type="NCBIfam" id="NF003545">
    <property type="entry name" value="PRK05205.1-1"/>
    <property type="match status" value="1"/>
</dbReference>
<dbReference type="PANTHER" id="PTHR11608">
    <property type="entry name" value="BIFUNCTIONAL PROTEIN PYRR"/>
    <property type="match status" value="1"/>
</dbReference>
<dbReference type="PANTHER" id="PTHR11608:SF0">
    <property type="entry name" value="BIFUNCTIONAL PROTEIN PYRR"/>
    <property type="match status" value="1"/>
</dbReference>
<dbReference type="Pfam" id="PF00156">
    <property type="entry name" value="Pribosyltran"/>
    <property type="match status" value="1"/>
</dbReference>
<dbReference type="SUPFAM" id="SSF53271">
    <property type="entry name" value="PRTase-like"/>
    <property type="match status" value="1"/>
</dbReference>
<organism>
    <name type="scientific">Pseudomonas paraeruginosa (strain DSM 24068 / PA7)</name>
    <name type="common">Pseudomonas aeruginosa (strain PA7)</name>
    <dbReference type="NCBI Taxonomy" id="381754"/>
    <lineage>
        <taxon>Bacteria</taxon>
        <taxon>Pseudomonadati</taxon>
        <taxon>Pseudomonadota</taxon>
        <taxon>Gammaproteobacteria</taxon>
        <taxon>Pseudomonadales</taxon>
        <taxon>Pseudomonadaceae</taxon>
        <taxon>Pseudomonas</taxon>
        <taxon>Pseudomonas paraeruginosa</taxon>
    </lineage>
</organism>
<keyword id="KW-0328">Glycosyltransferase</keyword>
<keyword id="KW-0804">Transcription</keyword>
<keyword id="KW-0805">Transcription regulation</keyword>
<keyword id="KW-0808">Transferase</keyword>
<feature type="chain" id="PRO_1000053855" description="Bifunctional protein PyrR">
    <location>
        <begin position="1"/>
        <end position="170"/>
    </location>
</feature>
<feature type="short sequence motif" description="PRPP-binding" evidence="1">
    <location>
        <begin position="90"/>
        <end position="102"/>
    </location>
</feature>
<protein>
    <recommendedName>
        <fullName evidence="1">Bifunctional protein PyrR</fullName>
    </recommendedName>
    <domain>
        <recommendedName>
            <fullName evidence="1">Pyrimidine operon regulatory protein</fullName>
        </recommendedName>
    </domain>
    <domain>
        <recommendedName>
            <fullName evidence="1">Uracil phosphoribosyltransferase</fullName>
            <shortName evidence="1">UPRTase</shortName>
            <ecNumber evidence="1">2.4.2.9</ecNumber>
        </recommendedName>
    </domain>
</protein>
<evidence type="ECO:0000255" key="1">
    <source>
        <dbReference type="HAMAP-Rule" id="MF_01219"/>
    </source>
</evidence>
<accession>A6UYL3</accession>
<proteinExistence type="inferred from homology"/>
<gene>
    <name evidence="1" type="primary">pyrR</name>
    <name type="ordered locus">PSPA7_0503</name>
</gene>
<sequence length="170" mass="18646">MSLPNPAELLPRMASDLRAHLAERGIERPRYVGIHTGGIWVAEALLKALGNEEPLGTLDVSFYRDDFTRNGLHPQVRPSALPFEIDGQHLVLVDDVLMSGRTIRAALNELFDYGRPASVTLVCLLDLNARELPIRPDVVGQTLSLGRDERVKLVGPAPLALERKVLSPAS</sequence>
<name>PYRR_PSEP7</name>
<reference key="1">
    <citation type="submission" date="2007-06" db="EMBL/GenBank/DDBJ databases">
        <authorList>
            <person name="Dodson R.J."/>
            <person name="Harkins D."/>
            <person name="Paulsen I.T."/>
        </authorList>
    </citation>
    <scope>NUCLEOTIDE SEQUENCE [LARGE SCALE GENOMIC DNA]</scope>
    <source>
        <strain>DSM 24068 / PA7</strain>
    </source>
</reference>